<protein>
    <recommendedName>
        <fullName>Pre-rRNA-processing protein RIX1</fullName>
    </recommendedName>
</protein>
<dbReference type="EMBL" id="AAVQ01000001">
    <property type="protein sequence ID" value="EAZ63293.2"/>
    <property type="molecule type" value="Genomic_DNA"/>
</dbReference>
<dbReference type="RefSeq" id="XP_001387316.2">
    <property type="nucleotide sequence ID" value="XM_001387279.1"/>
</dbReference>
<dbReference type="SMR" id="A3GF61"/>
<dbReference type="FunCoup" id="A3GF61">
    <property type="interactions" value="337"/>
</dbReference>
<dbReference type="STRING" id="322104.A3GF61"/>
<dbReference type="GeneID" id="4850910"/>
<dbReference type="KEGG" id="pic:PICST_52773"/>
<dbReference type="eggNOG" id="ENOG502R65X">
    <property type="taxonomic scope" value="Eukaryota"/>
</dbReference>
<dbReference type="HOGENOM" id="CLU_020084_1_0_1"/>
<dbReference type="InParanoid" id="A3GF61"/>
<dbReference type="OMA" id="WCGINLI"/>
<dbReference type="OrthoDB" id="20900at2759"/>
<dbReference type="Proteomes" id="UP000002258">
    <property type="component" value="Chromosome 1"/>
</dbReference>
<dbReference type="GO" id="GO:0005634">
    <property type="term" value="C:nucleus"/>
    <property type="evidence" value="ECO:0007669"/>
    <property type="project" value="UniProtKB-SubCell"/>
</dbReference>
<dbReference type="GO" id="GO:0006364">
    <property type="term" value="P:rRNA processing"/>
    <property type="evidence" value="ECO:0007669"/>
    <property type="project" value="UniProtKB-KW"/>
</dbReference>
<dbReference type="InterPro" id="IPR016024">
    <property type="entry name" value="ARM-type_fold"/>
</dbReference>
<dbReference type="InterPro" id="IPR012583">
    <property type="entry name" value="RIX1_N"/>
</dbReference>
<dbReference type="PANTHER" id="PTHR34105">
    <property type="entry name" value="PROLINE-, GLUTAMIC ACID- AND LEUCINE-RICH PROTEIN 1"/>
    <property type="match status" value="1"/>
</dbReference>
<dbReference type="PANTHER" id="PTHR34105:SF1">
    <property type="entry name" value="PROLINE-, GLUTAMIC ACID- AND LEUCINE-RICH PROTEIN 1"/>
    <property type="match status" value="1"/>
</dbReference>
<dbReference type="Pfam" id="PF08167">
    <property type="entry name" value="RIX1"/>
    <property type="match status" value="1"/>
</dbReference>
<dbReference type="SUPFAM" id="SSF48371">
    <property type="entry name" value="ARM repeat"/>
    <property type="match status" value="1"/>
</dbReference>
<keyword id="KW-0539">Nucleus</keyword>
<keyword id="KW-1185">Reference proteome</keyword>
<keyword id="KW-0690">Ribosome biogenesis</keyword>
<keyword id="KW-0698">rRNA processing</keyword>
<organism>
    <name type="scientific">Scheffersomyces stipitis (strain ATCC 58785 / CBS 6054 / NBRC 10063 / NRRL Y-11545)</name>
    <name type="common">Yeast</name>
    <name type="synonym">Pichia stipitis</name>
    <dbReference type="NCBI Taxonomy" id="322104"/>
    <lineage>
        <taxon>Eukaryota</taxon>
        <taxon>Fungi</taxon>
        <taxon>Dikarya</taxon>
        <taxon>Ascomycota</taxon>
        <taxon>Saccharomycotina</taxon>
        <taxon>Pichiomycetes</taxon>
        <taxon>Debaryomycetaceae</taxon>
        <taxon>Scheffersomyces</taxon>
    </lineage>
</organism>
<feature type="chain" id="PRO_0000308921" description="Pre-rRNA-processing protein RIX1">
    <location>
        <begin position="1"/>
        <end position="724"/>
    </location>
</feature>
<feature type="region of interest" description="Disordered" evidence="2">
    <location>
        <begin position="444"/>
        <end position="464"/>
    </location>
</feature>
<feature type="region of interest" description="Disordered" evidence="2">
    <location>
        <begin position="592"/>
        <end position="644"/>
    </location>
</feature>
<feature type="region of interest" description="Disordered" evidence="2">
    <location>
        <begin position="656"/>
        <end position="724"/>
    </location>
</feature>
<feature type="compositionally biased region" description="Acidic residues" evidence="2">
    <location>
        <begin position="593"/>
        <end position="610"/>
    </location>
</feature>
<feature type="compositionally biased region" description="Basic and acidic residues" evidence="2">
    <location>
        <begin position="611"/>
        <end position="635"/>
    </location>
</feature>
<feature type="compositionally biased region" description="Acidic residues" evidence="2">
    <location>
        <begin position="704"/>
        <end position="724"/>
    </location>
</feature>
<comment type="function">
    <text evidence="1">Component of the RIX1 complex required for processing of ITS2 sequences from 35S pre-rRNA and the nucleoplasmic transit of the pre-60S ribosomal subunits. Regulates pre-60S association of the critical remodeling factor MDN1.</text>
</comment>
<comment type="subunit">
    <text evidence="1">Component of the RIX1 complex, composed of IPI1, RIX1/IPI2 and IPI3 in a 1:2:2 stoichiometry. The complex interacts (via RIX1) with MDN1 (via its hexameric AAA ATPase ring) and the pre-60S ribosome particles.</text>
</comment>
<comment type="subcellular location">
    <subcellularLocation>
        <location evidence="1">Nucleus</location>
    </subcellularLocation>
</comment>
<comment type="similarity">
    <text evidence="3">Belongs to the RIX1/PELP1 family.</text>
</comment>
<name>RIX1_PICST</name>
<gene>
    <name type="primary">RIX1</name>
    <name type="ORF">PICST_52773</name>
</gene>
<reference key="1">
    <citation type="journal article" date="2007" name="Nat. Biotechnol.">
        <title>Genome sequence of the lignocellulose-bioconverting and xylose-fermenting yeast Pichia stipitis.</title>
        <authorList>
            <person name="Jeffries T.W."/>
            <person name="Grigoriev I.V."/>
            <person name="Grimwood J."/>
            <person name="Laplaza J.M."/>
            <person name="Aerts A."/>
            <person name="Salamov A."/>
            <person name="Schmutz J."/>
            <person name="Lindquist E."/>
            <person name="Dehal P."/>
            <person name="Shapiro H."/>
            <person name="Jin Y.-S."/>
            <person name="Passoth V."/>
            <person name="Richardson P.M."/>
        </authorList>
    </citation>
    <scope>NUCLEOTIDE SEQUENCE [LARGE SCALE GENOMIC DNA]</scope>
    <source>
        <strain>ATCC 58785 / CBS 6054 / NBRC 10063 / NRRL Y-11545</strain>
    </source>
</reference>
<proteinExistence type="inferred from homology"/>
<evidence type="ECO:0000250" key="1">
    <source>
        <dbReference type="UniProtKB" id="P38883"/>
    </source>
</evidence>
<evidence type="ECO:0000256" key="2">
    <source>
        <dbReference type="SAM" id="MobiDB-lite"/>
    </source>
</evidence>
<evidence type="ECO:0000305" key="3"/>
<accession>A3GF61</accession>
<sequence>MSIPLSLVLKQLEGSPSSVVPLLSTLYYDKSILNNISKSDSKHLVSRILNLTRSPIEYNKWAGTNLIRVISDNYTILATEGSNLFGELVKNLDSYNDTVNIKVLTSTVEALNYLCDKIRGKPTMTREILTPKLSTIITLYMDKLHFSPLIIIKSLKKLIQFHPTTFRPFGNKLRAKLITFLHLQDFVNFPEPLKSAIYQTLASLPAIEKTEPELKWESDVKSLIKELKSVLAIYNEFLNLGDDSSLPRLFEQLPSFEENQKNDKILPDMVIDVNEPSSVFQISTRVDILLNLLNAYVTYATQFSVKVPLGLVLVVNEIICSINVRYISYKNDVRDEQIRKIVKSTTVLNSLNSIKFLKDLAFTYKGSMLPHLGNILSLLEVLVPFKNKKIDYDELIIQEVLNRELLSCVSVYLSLVSFLSDHTQLLRFVDVGLLLVEPRITDSTAQQNNNNHNSNGGKKHKKNKNTTAIPLSDILSHQHLFNEAIPEATVNIVRQFMSAVITTVTLPPTQHYKIMRYILIQAVHSRYYNNEHLIPRELRSLLINAVLYPGYEKISLLPIVSTILGDDPLLSVFNNPRFPPLPIYVKNVKDESVFEEEEEEEEEHEQEEKEIELPEQKRAIDEDELPEAKKRKMEDEPQVIQQEQIEQVVEDKIFTKVNPETVVHFAPTKEVEPESRTIQNQKPETVPEPVPVAPVQQMSQNINGDEDESDFEMPEIDVDDSDEE</sequence>